<comment type="function">
    <text evidence="1">Functions in the biosynthesis of branched-chain amino acids. Catalyzes the dehydration of (2R,3R)-2,3-dihydroxy-3-methylpentanoate (2,3-dihydroxy-3-methylvalerate) into 2-oxo-3-methylpentanoate (2-oxo-3-methylvalerate) and of (2R)-2,3-dihydroxy-3-methylbutanoate (2,3-dihydroxyisovalerate) into 2-oxo-3-methylbutanoate (2-oxoisovalerate), the penultimate precursor to L-isoleucine and L-valine, respectively.</text>
</comment>
<comment type="catalytic activity">
    <reaction evidence="1">
        <text>(2R)-2,3-dihydroxy-3-methylbutanoate = 3-methyl-2-oxobutanoate + H2O</text>
        <dbReference type="Rhea" id="RHEA:24809"/>
        <dbReference type="ChEBI" id="CHEBI:11851"/>
        <dbReference type="ChEBI" id="CHEBI:15377"/>
        <dbReference type="ChEBI" id="CHEBI:49072"/>
        <dbReference type="EC" id="4.2.1.9"/>
    </reaction>
    <physiologicalReaction direction="left-to-right" evidence="1">
        <dbReference type="Rhea" id="RHEA:24810"/>
    </physiologicalReaction>
</comment>
<comment type="catalytic activity">
    <reaction evidence="1">
        <text>(2R,3R)-2,3-dihydroxy-3-methylpentanoate = (S)-3-methyl-2-oxopentanoate + H2O</text>
        <dbReference type="Rhea" id="RHEA:27694"/>
        <dbReference type="ChEBI" id="CHEBI:15377"/>
        <dbReference type="ChEBI" id="CHEBI:35146"/>
        <dbReference type="ChEBI" id="CHEBI:49258"/>
        <dbReference type="EC" id="4.2.1.9"/>
    </reaction>
    <physiologicalReaction direction="left-to-right" evidence="1">
        <dbReference type="Rhea" id="RHEA:27695"/>
    </physiologicalReaction>
</comment>
<comment type="cofactor">
    <cofactor evidence="1">
        <name>[2Fe-2S] cluster</name>
        <dbReference type="ChEBI" id="CHEBI:190135"/>
    </cofactor>
    <text evidence="1">Binds 1 [2Fe-2S] cluster per subunit. This cluster acts as a Lewis acid cofactor.</text>
</comment>
<comment type="cofactor">
    <cofactor evidence="1">
        <name>Mg(2+)</name>
        <dbReference type="ChEBI" id="CHEBI:18420"/>
    </cofactor>
</comment>
<comment type="pathway">
    <text evidence="1">Amino-acid biosynthesis; L-isoleucine biosynthesis; L-isoleucine from 2-oxobutanoate: step 3/4.</text>
</comment>
<comment type="pathway">
    <text evidence="1">Amino-acid biosynthesis; L-valine biosynthesis; L-valine from pyruvate: step 3/4.</text>
</comment>
<comment type="subunit">
    <text evidence="1">Homodimer.</text>
</comment>
<comment type="similarity">
    <text evidence="1">Belongs to the IlvD/Edd family.</text>
</comment>
<keyword id="KW-0001">2Fe-2S</keyword>
<keyword id="KW-0028">Amino-acid biosynthesis</keyword>
<keyword id="KW-0100">Branched-chain amino acid biosynthesis</keyword>
<keyword id="KW-0408">Iron</keyword>
<keyword id="KW-0411">Iron-sulfur</keyword>
<keyword id="KW-0456">Lyase</keyword>
<keyword id="KW-0460">Magnesium</keyword>
<keyword id="KW-0479">Metal-binding</keyword>
<name>ILVD_BURMS</name>
<dbReference type="EC" id="4.2.1.9" evidence="1"/>
<dbReference type="EMBL" id="CP000526">
    <property type="protein sequence ID" value="ABM52085.1"/>
    <property type="molecule type" value="Genomic_DNA"/>
</dbReference>
<dbReference type="RefSeq" id="WP_004191611.1">
    <property type="nucleotide sequence ID" value="NC_008785.1"/>
</dbReference>
<dbReference type="SMR" id="A1V5Z0"/>
<dbReference type="GeneID" id="92978440"/>
<dbReference type="KEGG" id="bmv:BMASAVP1_A2334"/>
<dbReference type="HOGENOM" id="CLU_014271_4_1_4"/>
<dbReference type="UniPathway" id="UPA00047">
    <property type="reaction ID" value="UER00057"/>
</dbReference>
<dbReference type="UniPathway" id="UPA00049">
    <property type="reaction ID" value="UER00061"/>
</dbReference>
<dbReference type="GO" id="GO:0051537">
    <property type="term" value="F:2 iron, 2 sulfur cluster binding"/>
    <property type="evidence" value="ECO:0007669"/>
    <property type="project" value="UniProtKB-UniRule"/>
</dbReference>
<dbReference type="GO" id="GO:0004160">
    <property type="term" value="F:dihydroxy-acid dehydratase activity"/>
    <property type="evidence" value="ECO:0007669"/>
    <property type="project" value="UniProtKB-UniRule"/>
</dbReference>
<dbReference type="GO" id="GO:0000287">
    <property type="term" value="F:magnesium ion binding"/>
    <property type="evidence" value="ECO:0007669"/>
    <property type="project" value="UniProtKB-UniRule"/>
</dbReference>
<dbReference type="GO" id="GO:0009097">
    <property type="term" value="P:isoleucine biosynthetic process"/>
    <property type="evidence" value="ECO:0007669"/>
    <property type="project" value="UniProtKB-UniRule"/>
</dbReference>
<dbReference type="GO" id="GO:0009099">
    <property type="term" value="P:L-valine biosynthetic process"/>
    <property type="evidence" value="ECO:0007669"/>
    <property type="project" value="UniProtKB-UniRule"/>
</dbReference>
<dbReference type="FunFam" id="3.50.30.80:FF:000001">
    <property type="entry name" value="Dihydroxy-acid dehydratase"/>
    <property type="match status" value="1"/>
</dbReference>
<dbReference type="Gene3D" id="3.50.30.80">
    <property type="entry name" value="IlvD/EDD C-terminal domain-like"/>
    <property type="match status" value="1"/>
</dbReference>
<dbReference type="HAMAP" id="MF_00012">
    <property type="entry name" value="IlvD"/>
    <property type="match status" value="1"/>
</dbReference>
<dbReference type="InterPro" id="IPR050165">
    <property type="entry name" value="DHAD_IlvD/Edd"/>
</dbReference>
<dbReference type="InterPro" id="IPR042096">
    <property type="entry name" value="Dihydro-acid_dehy_C"/>
</dbReference>
<dbReference type="InterPro" id="IPR004404">
    <property type="entry name" value="DihydroxyA_deHydtase"/>
</dbReference>
<dbReference type="InterPro" id="IPR020558">
    <property type="entry name" value="DiOHA_6PGluconate_deHydtase_CS"/>
</dbReference>
<dbReference type="InterPro" id="IPR056740">
    <property type="entry name" value="ILV_EDD_C"/>
</dbReference>
<dbReference type="InterPro" id="IPR000581">
    <property type="entry name" value="ILV_EDD_N"/>
</dbReference>
<dbReference type="InterPro" id="IPR037237">
    <property type="entry name" value="IlvD/EDD_N"/>
</dbReference>
<dbReference type="NCBIfam" id="TIGR00110">
    <property type="entry name" value="ilvD"/>
    <property type="match status" value="1"/>
</dbReference>
<dbReference type="NCBIfam" id="NF002068">
    <property type="entry name" value="PRK00911.1"/>
    <property type="match status" value="1"/>
</dbReference>
<dbReference type="PANTHER" id="PTHR21000">
    <property type="entry name" value="DIHYDROXY-ACID DEHYDRATASE DAD"/>
    <property type="match status" value="1"/>
</dbReference>
<dbReference type="PANTHER" id="PTHR21000:SF5">
    <property type="entry name" value="DIHYDROXY-ACID DEHYDRATASE, MITOCHONDRIAL"/>
    <property type="match status" value="1"/>
</dbReference>
<dbReference type="Pfam" id="PF24877">
    <property type="entry name" value="ILV_EDD_C"/>
    <property type="match status" value="1"/>
</dbReference>
<dbReference type="Pfam" id="PF00920">
    <property type="entry name" value="ILVD_EDD_N"/>
    <property type="match status" value="1"/>
</dbReference>
<dbReference type="SUPFAM" id="SSF143975">
    <property type="entry name" value="IlvD/EDD N-terminal domain-like"/>
    <property type="match status" value="1"/>
</dbReference>
<dbReference type="SUPFAM" id="SSF52016">
    <property type="entry name" value="LeuD/IlvD-like"/>
    <property type="match status" value="1"/>
</dbReference>
<dbReference type="PROSITE" id="PS00886">
    <property type="entry name" value="ILVD_EDD_1"/>
    <property type="match status" value="1"/>
</dbReference>
<dbReference type="PROSITE" id="PS00887">
    <property type="entry name" value="ILVD_EDD_2"/>
    <property type="match status" value="1"/>
</dbReference>
<sequence>MSYNRRSKNITQGVARSPNRSMYYALGYQKEDFDKPMIGIANGHSTITPCNAGLQRLSDAAVAAVKDAGANPQIFGTPTISDGMSMGTEGMKYSLVSREVIADCIETCVQGQWMDGVVVVGGCDKNMPGGMIALARINVPGIYVYGGTIRPGHWKGHDLTIVSSFEAVGEFTAGRMSQEDFEGVEKNACPTTGSCGGMYTANTMSSSFEALGMSLLYSSTMANPDQEKVDSAAESARVLVEAVKKDLKPRDIITKQSIENAVSVIMATGGSTNAVLHYLAIAHAAEIDWSIEDFERIRKRVPVICDLKPSGQYVATDLHAAGGIPQVMKLLLDAGLLHGDCMTITGRTLAEELKDVPSVPRADQKVIHPIDQALYKEGHLAILKGNLAEDGAVAKITGLKNPVITGPARVFDDEQSALAAILDDRIRAGDVVVLRYLGPQGGPGMPEMLAPTSAIIGKGLGESVGLITDGRFSGGTWGMVVGHVAPEAFVGGTIALVQEGDSITIDAHKLLLQLNVDDAELARRRAAWKQPAPRYTRGVLAKYAALARPANQGAVTG</sequence>
<feature type="chain" id="PRO_1000000963" description="Dihydroxy-acid dehydratase">
    <location>
        <begin position="1"/>
        <end position="557"/>
    </location>
</feature>
<feature type="active site" description="Proton acceptor" evidence="1">
    <location>
        <position position="473"/>
    </location>
</feature>
<feature type="binding site" evidence="1">
    <location>
        <position position="50"/>
    </location>
    <ligand>
        <name>[2Fe-2S] cluster</name>
        <dbReference type="ChEBI" id="CHEBI:190135"/>
    </ligand>
</feature>
<feature type="binding site" evidence="1">
    <location>
        <position position="82"/>
    </location>
    <ligand>
        <name>Mg(2+)</name>
        <dbReference type="ChEBI" id="CHEBI:18420"/>
    </ligand>
</feature>
<feature type="binding site" evidence="1">
    <location>
        <position position="123"/>
    </location>
    <ligand>
        <name>[2Fe-2S] cluster</name>
        <dbReference type="ChEBI" id="CHEBI:190135"/>
    </ligand>
</feature>
<feature type="binding site" evidence="1">
    <location>
        <position position="124"/>
    </location>
    <ligand>
        <name>Mg(2+)</name>
        <dbReference type="ChEBI" id="CHEBI:18420"/>
    </ligand>
</feature>
<feature type="binding site" description="via carbamate group" evidence="1">
    <location>
        <position position="125"/>
    </location>
    <ligand>
        <name>Mg(2+)</name>
        <dbReference type="ChEBI" id="CHEBI:18420"/>
    </ligand>
</feature>
<feature type="binding site" evidence="1">
    <location>
        <position position="195"/>
    </location>
    <ligand>
        <name>[2Fe-2S] cluster</name>
        <dbReference type="ChEBI" id="CHEBI:190135"/>
    </ligand>
</feature>
<feature type="binding site" evidence="1">
    <location>
        <position position="447"/>
    </location>
    <ligand>
        <name>Mg(2+)</name>
        <dbReference type="ChEBI" id="CHEBI:18420"/>
    </ligand>
</feature>
<feature type="modified residue" description="N6-carboxylysine" evidence="1">
    <location>
        <position position="125"/>
    </location>
</feature>
<proteinExistence type="inferred from homology"/>
<protein>
    <recommendedName>
        <fullName evidence="1">Dihydroxy-acid dehydratase</fullName>
        <shortName evidence="1">DAD</shortName>
        <ecNumber evidence="1">4.2.1.9</ecNumber>
    </recommendedName>
</protein>
<evidence type="ECO:0000255" key="1">
    <source>
        <dbReference type="HAMAP-Rule" id="MF_00012"/>
    </source>
</evidence>
<reference key="1">
    <citation type="journal article" date="2010" name="Genome Biol. Evol.">
        <title>Continuing evolution of Burkholderia mallei through genome reduction and large-scale rearrangements.</title>
        <authorList>
            <person name="Losada L."/>
            <person name="Ronning C.M."/>
            <person name="DeShazer D."/>
            <person name="Woods D."/>
            <person name="Fedorova N."/>
            <person name="Kim H.S."/>
            <person name="Shabalina S.A."/>
            <person name="Pearson T.R."/>
            <person name="Brinkac L."/>
            <person name="Tan P."/>
            <person name="Nandi T."/>
            <person name="Crabtree J."/>
            <person name="Badger J."/>
            <person name="Beckstrom-Sternberg S."/>
            <person name="Saqib M."/>
            <person name="Schutzer S.E."/>
            <person name="Keim P."/>
            <person name="Nierman W.C."/>
        </authorList>
    </citation>
    <scope>NUCLEOTIDE SEQUENCE [LARGE SCALE GENOMIC DNA]</scope>
    <source>
        <strain>SAVP1</strain>
    </source>
</reference>
<gene>
    <name evidence="1" type="primary">ilvD</name>
    <name type="ordered locus">BMASAVP1_A2334</name>
</gene>
<accession>A1V5Z0</accession>
<organism>
    <name type="scientific">Burkholderia mallei (strain SAVP1)</name>
    <dbReference type="NCBI Taxonomy" id="320388"/>
    <lineage>
        <taxon>Bacteria</taxon>
        <taxon>Pseudomonadati</taxon>
        <taxon>Pseudomonadota</taxon>
        <taxon>Betaproteobacteria</taxon>
        <taxon>Burkholderiales</taxon>
        <taxon>Burkholderiaceae</taxon>
        <taxon>Burkholderia</taxon>
        <taxon>pseudomallei group</taxon>
    </lineage>
</organism>